<keyword id="KW-0414">Isoprene biosynthesis</keyword>
<keyword id="KW-0460">Magnesium</keyword>
<keyword id="KW-0479">Metal-binding</keyword>
<keyword id="KW-1185">Reference proteome</keyword>
<keyword id="KW-0784">Thiamine biosynthesis</keyword>
<keyword id="KW-0786">Thiamine pyrophosphate</keyword>
<keyword id="KW-0808">Transferase</keyword>
<proteinExistence type="inferred from homology"/>
<protein>
    <recommendedName>
        <fullName evidence="1">1-deoxy-D-xylulose-5-phosphate synthase</fullName>
        <ecNumber evidence="1">2.2.1.7</ecNumber>
    </recommendedName>
    <alternativeName>
        <fullName evidence="1">1-deoxyxylulose-5-phosphate synthase</fullName>
        <shortName evidence="1">DXP synthase</shortName>
        <shortName evidence="1">DXPS</shortName>
    </alternativeName>
</protein>
<comment type="function">
    <text evidence="1">Catalyzes the acyloin condensation reaction between C atoms 2 and 3 of pyruvate and glyceraldehyde 3-phosphate to yield 1-deoxy-D-xylulose-5-phosphate (DXP).</text>
</comment>
<comment type="catalytic activity">
    <reaction evidence="1">
        <text>D-glyceraldehyde 3-phosphate + pyruvate + H(+) = 1-deoxy-D-xylulose 5-phosphate + CO2</text>
        <dbReference type="Rhea" id="RHEA:12605"/>
        <dbReference type="ChEBI" id="CHEBI:15361"/>
        <dbReference type="ChEBI" id="CHEBI:15378"/>
        <dbReference type="ChEBI" id="CHEBI:16526"/>
        <dbReference type="ChEBI" id="CHEBI:57792"/>
        <dbReference type="ChEBI" id="CHEBI:59776"/>
        <dbReference type="EC" id="2.2.1.7"/>
    </reaction>
</comment>
<comment type="cofactor">
    <cofactor evidence="1">
        <name>Mg(2+)</name>
        <dbReference type="ChEBI" id="CHEBI:18420"/>
    </cofactor>
    <text evidence="1">Binds 1 Mg(2+) ion per subunit.</text>
</comment>
<comment type="cofactor">
    <cofactor evidence="1">
        <name>thiamine diphosphate</name>
        <dbReference type="ChEBI" id="CHEBI:58937"/>
    </cofactor>
    <text evidence="1">Binds 1 thiamine pyrophosphate per subunit.</text>
</comment>
<comment type="pathway">
    <text evidence="1">Metabolic intermediate biosynthesis; 1-deoxy-D-xylulose 5-phosphate biosynthesis; 1-deoxy-D-xylulose 5-phosphate from D-glyceraldehyde 3-phosphate and pyruvate: step 1/1.</text>
</comment>
<comment type="subunit">
    <text evidence="1">Homodimer.</text>
</comment>
<comment type="similarity">
    <text evidence="1">Belongs to the transketolase family. DXPS subfamily.</text>
</comment>
<reference key="1">
    <citation type="journal article" date="2008" name="Appl. Environ. Microbiol.">
        <title>Genome of the epsilonproteobacterial chemolithoautotroph Sulfurimonas denitrificans.</title>
        <authorList>
            <person name="Sievert S.M."/>
            <person name="Scott K.M."/>
            <person name="Klotz M.G."/>
            <person name="Chain P.S.G."/>
            <person name="Hauser L.J."/>
            <person name="Hemp J."/>
            <person name="Huegler M."/>
            <person name="Land M."/>
            <person name="Lapidus A."/>
            <person name="Larimer F.W."/>
            <person name="Lucas S."/>
            <person name="Malfatti S.A."/>
            <person name="Meyer F."/>
            <person name="Paulsen I.T."/>
            <person name="Ren Q."/>
            <person name="Simon J."/>
            <person name="Bailey K."/>
            <person name="Diaz E."/>
            <person name="Fitzpatrick K.A."/>
            <person name="Glover B."/>
            <person name="Gwatney N."/>
            <person name="Korajkic A."/>
            <person name="Long A."/>
            <person name="Mobberley J.M."/>
            <person name="Pantry S.N."/>
            <person name="Pazder G."/>
            <person name="Peterson S."/>
            <person name="Quintanilla J.D."/>
            <person name="Sprinkle R."/>
            <person name="Stephens J."/>
            <person name="Thomas P."/>
            <person name="Vaughn R."/>
            <person name="Weber M.J."/>
            <person name="Wooten L.L."/>
        </authorList>
    </citation>
    <scope>NUCLEOTIDE SEQUENCE [LARGE SCALE GENOMIC DNA]</scope>
    <source>
        <strain>ATCC 33889 / DSM 1251</strain>
    </source>
</reference>
<name>DXS_SULDN</name>
<evidence type="ECO:0000255" key="1">
    <source>
        <dbReference type="HAMAP-Rule" id="MF_00315"/>
    </source>
</evidence>
<feature type="chain" id="PRO_0000256500" description="1-deoxy-D-xylulose-5-phosphate synthase">
    <location>
        <begin position="1"/>
        <end position="606"/>
    </location>
</feature>
<feature type="binding site" evidence="1">
    <location>
        <position position="63"/>
    </location>
    <ligand>
        <name>thiamine diphosphate</name>
        <dbReference type="ChEBI" id="CHEBI:58937"/>
    </ligand>
</feature>
<feature type="binding site" evidence="1">
    <location>
        <begin position="104"/>
        <end position="106"/>
    </location>
    <ligand>
        <name>thiamine diphosphate</name>
        <dbReference type="ChEBI" id="CHEBI:58937"/>
    </ligand>
</feature>
<feature type="binding site" evidence="1">
    <location>
        <position position="137"/>
    </location>
    <ligand>
        <name>Mg(2+)</name>
        <dbReference type="ChEBI" id="CHEBI:18420"/>
    </ligand>
</feature>
<feature type="binding site" evidence="1">
    <location>
        <begin position="138"/>
        <end position="139"/>
    </location>
    <ligand>
        <name>thiamine diphosphate</name>
        <dbReference type="ChEBI" id="CHEBI:58937"/>
    </ligand>
</feature>
<feature type="binding site" evidence="1">
    <location>
        <position position="166"/>
    </location>
    <ligand>
        <name>Mg(2+)</name>
        <dbReference type="ChEBI" id="CHEBI:18420"/>
    </ligand>
</feature>
<feature type="binding site" evidence="1">
    <location>
        <position position="166"/>
    </location>
    <ligand>
        <name>thiamine diphosphate</name>
        <dbReference type="ChEBI" id="CHEBI:58937"/>
    </ligand>
</feature>
<feature type="binding site" evidence="1">
    <location>
        <position position="273"/>
    </location>
    <ligand>
        <name>thiamine diphosphate</name>
        <dbReference type="ChEBI" id="CHEBI:58937"/>
    </ligand>
</feature>
<feature type="binding site" evidence="1">
    <location>
        <position position="354"/>
    </location>
    <ligand>
        <name>thiamine diphosphate</name>
        <dbReference type="ChEBI" id="CHEBI:58937"/>
    </ligand>
</feature>
<organism>
    <name type="scientific">Sulfurimonas denitrificans (strain ATCC 33889 / DSM 1251)</name>
    <name type="common">Thiomicrospira denitrificans (strain ATCC 33889 / DSM 1251)</name>
    <dbReference type="NCBI Taxonomy" id="326298"/>
    <lineage>
        <taxon>Bacteria</taxon>
        <taxon>Pseudomonadati</taxon>
        <taxon>Campylobacterota</taxon>
        <taxon>Epsilonproteobacteria</taxon>
        <taxon>Campylobacterales</taxon>
        <taxon>Sulfurimonadaceae</taxon>
        <taxon>Sulfurimonas</taxon>
    </lineage>
</organism>
<sequence>MNIKASRIKELETLCKNIREEILRVVSKNGGHLSSTLGATEIIVAMHEVFDSKKDPFIFDVSHQSYAHKLLTGRWDKFDTLREFNGLCGYTKPSESEHDYFVAGHSSTSISLGVGAAKAIALKGEQNSRIPVIMIGDGSMTAGMVYEALNELGERKYPMVIILNDNEMSISKPIGAISRILSSAMASPFYQNFKKHTENFVDNFGDGARYIAKRMEESLKLITPGIMFEEMGIDYIGPVDGHNIASLIEILQKAKELKKPVIVHAQTLKGKGYEIAEGKDEKWHGVGPFDLDSGAASKKSSAKSATQIYAEALLHLAKNNDKIVGATAAMPSGTGLSELIELYPNRFWDVAIAEQHAVTSMAALAKEGFKPFCTIYSTFLQRGYDQVIHDTCLMNLPVVFALDRAGIVGEDGETHQGVFDVSFLRAIPNMTLFAPRDEKSFHQAMAFAAQYQFPCSLRYPRGSFTQTSLPESSPFELAKSQLLQSNKGDVLFIGYGNGVGRAYETSKLLEEKISILDLRFIKPLDKEMLRDMATKHNKWFIFSDSAKMGGVGSAILEFFADEKILHVELESFEYEDSFITHGKTKDVEESLGLLPAQLAQKVKALI</sequence>
<dbReference type="EC" id="2.2.1.7" evidence="1"/>
<dbReference type="EMBL" id="CP000153">
    <property type="protein sequence ID" value="ABB43756.1"/>
    <property type="molecule type" value="Genomic_DNA"/>
</dbReference>
<dbReference type="RefSeq" id="WP_011372110.1">
    <property type="nucleotide sequence ID" value="NC_007575.1"/>
</dbReference>
<dbReference type="SMR" id="Q30TC5"/>
<dbReference type="STRING" id="326298.Suden_0475"/>
<dbReference type="KEGG" id="tdn:Suden_0475"/>
<dbReference type="eggNOG" id="COG1154">
    <property type="taxonomic scope" value="Bacteria"/>
</dbReference>
<dbReference type="HOGENOM" id="CLU_009227_1_4_7"/>
<dbReference type="OrthoDB" id="9803371at2"/>
<dbReference type="UniPathway" id="UPA00064">
    <property type="reaction ID" value="UER00091"/>
</dbReference>
<dbReference type="Proteomes" id="UP000002714">
    <property type="component" value="Chromosome"/>
</dbReference>
<dbReference type="GO" id="GO:0005829">
    <property type="term" value="C:cytosol"/>
    <property type="evidence" value="ECO:0007669"/>
    <property type="project" value="TreeGrafter"/>
</dbReference>
<dbReference type="GO" id="GO:0008661">
    <property type="term" value="F:1-deoxy-D-xylulose-5-phosphate synthase activity"/>
    <property type="evidence" value="ECO:0007669"/>
    <property type="project" value="UniProtKB-UniRule"/>
</dbReference>
<dbReference type="GO" id="GO:0000287">
    <property type="term" value="F:magnesium ion binding"/>
    <property type="evidence" value="ECO:0007669"/>
    <property type="project" value="UniProtKB-UniRule"/>
</dbReference>
<dbReference type="GO" id="GO:0030976">
    <property type="term" value="F:thiamine pyrophosphate binding"/>
    <property type="evidence" value="ECO:0007669"/>
    <property type="project" value="UniProtKB-UniRule"/>
</dbReference>
<dbReference type="GO" id="GO:0052865">
    <property type="term" value="P:1-deoxy-D-xylulose 5-phosphate biosynthetic process"/>
    <property type="evidence" value="ECO:0007669"/>
    <property type="project" value="UniProtKB-UniPathway"/>
</dbReference>
<dbReference type="GO" id="GO:0019288">
    <property type="term" value="P:isopentenyl diphosphate biosynthetic process, methylerythritol 4-phosphate pathway"/>
    <property type="evidence" value="ECO:0007669"/>
    <property type="project" value="TreeGrafter"/>
</dbReference>
<dbReference type="GO" id="GO:0016114">
    <property type="term" value="P:terpenoid biosynthetic process"/>
    <property type="evidence" value="ECO:0007669"/>
    <property type="project" value="UniProtKB-UniRule"/>
</dbReference>
<dbReference type="GO" id="GO:0009228">
    <property type="term" value="P:thiamine biosynthetic process"/>
    <property type="evidence" value="ECO:0007669"/>
    <property type="project" value="UniProtKB-UniRule"/>
</dbReference>
<dbReference type="CDD" id="cd02007">
    <property type="entry name" value="TPP_DXS"/>
    <property type="match status" value="1"/>
</dbReference>
<dbReference type="CDD" id="cd07033">
    <property type="entry name" value="TPP_PYR_DXS_TK_like"/>
    <property type="match status" value="1"/>
</dbReference>
<dbReference type="Gene3D" id="3.40.50.920">
    <property type="match status" value="1"/>
</dbReference>
<dbReference type="Gene3D" id="3.40.50.970">
    <property type="match status" value="2"/>
</dbReference>
<dbReference type="HAMAP" id="MF_00315">
    <property type="entry name" value="DXP_synth"/>
    <property type="match status" value="1"/>
</dbReference>
<dbReference type="InterPro" id="IPR005477">
    <property type="entry name" value="Dxylulose-5-P_synthase"/>
</dbReference>
<dbReference type="InterPro" id="IPR029061">
    <property type="entry name" value="THDP-binding"/>
</dbReference>
<dbReference type="InterPro" id="IPR009014">
    <property type="entry name" value="Transketo_C/PFOR_II"/>
</dbReference>
<dbReference type="InterPro" id="IPR005475">
    <property type="entry name" value="Transketolase-like_Pyr-bd"/>
</dbReference>
<dbReference type="InterPro" id="IPR020826">
    <property type="entry name" value="Transketolase_BS"/>
</dbReference>
<dbReference type="InterPro" id="IPR033248">
    <property type="entry name" value="Transketolase_C"/>
</dbReference>
<dbReference type="NCBIfam" id="TIGR00204">
    <property type="entry name" value="dxs"/>
    <property type="match status" value="1"/>
</dbReference>
<dbReference type="NCBIfam" id="NF003933">
    <property type="entry name" value="PRK05444.2-2"/>
    <property type="match status" value="1"/>
</dbReference>
<dbReference type="PANTHER" id="PTHR43322">
    <property type="entry name" value="1-D-DEOXYXYLULOSE 5-PHOSPHATE SYNTHASE-RELATED"/>
    <property type="match status" value="1"/>
</dbReference>
<dbReference type="PANTHER" id="PTHR43322:SF5">
    <property type="entry name" value="1-DEOXY-D-XYLULOSE-5-PHOSPHATE SYNTHASE, CHLOROPLASTIC"/>
    <property type="match status" value="1"/>
</dbReference>
<dbReference type="Pfam" id="PF13292">
    <property type="entry name" value="DXP_synthase_N"/>
    <property type="match status" value="1"/>
</dbReference>
<dbReference type="Pfam" id="PF02779">
    <property type="entry name" value="Transket_pyr"/>
    <property type="match status" value="1"/>
</dbReference>
<dbReference type="Pfam" id="PF02780">
    <property type="entry name" value="Transketolase_C"/>
    <property type="match status" value="1"/>
</dbReference>
<dbReference type="SMART" id="SM00861">
    <property type="entry name" value="Transket_pyr"/>
    <property type="match status" value="1"/>
</dbReference>
<dbReference type="SUPFAM" id="SSF52518">
    <property type="entry name" value="Thiamin diphosphate-binding fold (THDP-binding)"/>
    <property type="match status" value="1"/>
</dbReference>
<dbReference type="SUPFAM" id="SSF52922">
    <property type="entry name" value="TK C-terminal domain-like"/>
    <property type="match status" value="1"/>
</dbReference>
<dbReference type="PROSITE" id="PS00802">
    <property type="entry name" value="TRANSKETOLASE_2"/>
    <property type="match status" value="1"/>
</dbReference>
<accession>Q30TC5</accession>
<gene>
    <name evidence="1" type="primary">dxs</name>
    <name type="ordered locus">Suden_0475</name>
</gene>